<gene>
    <name evidence="1" type="primary">mdh</name>
    <name type="ordered locus">NGR_c31300</name>
</gene>
<dbReference type="EC" id="1.1.1.37" evidence="1"/>
<dbReference type="EMBL" id="CP001389">
    <property type="protein sequence ID" value="ACP26865.1"/>
    <property type="molecule type" value="Genomic_DNA"/>
</dbReference>
<dbReference type="RefSeq" id="WP_012709617.1">
    <property type="nucleotide sequence ID" value="NC_012587.1"/>
</dbReference>
<dbReference type="RefSeq" id="YP_002827618.1">
    <property type="nucleotide sequence ID" value="NC_012587.1"/>
</dbReference>
<dbReference type="SMR" id="C3M9U0"/>
<dbReference type="STRING" id="394.NGR_c31300"/>
<dbReference type="KEGG" id="rhi:NGR_c31300"/>
<dbReference type="PATRIC" id="fig|394.7.peg.5969"/>
<dbReference type="eggNOG" id="COG0039">
    <property type="taxonomic scope" value="Bacteria"/>
</dbReference>
<dbReference type="HOGENOM" id="CLU_045401_2_1_5"/>
<dbReference type="OrthoDB" id="9802969at2"/>
<dbReference type="Proteomes" id="UP000001054">
    <property type="component" value="Chromosome"/>
</dbReference>
<dbReference type="GO" id="GO:0004459">
    <property type="term" value="F:L-lactate dehydrogenase activity"/>
    <property type="evidence" value="ECO:0007669"/>
    <property type="project" value="TreeGrafter"/>
</dbReference>
<dbReference type="GO" id="GO:0030060">
    <property type="term" value="F:L-malate dehydrogenase (NAD+) activity"/>
    <property type="evidence" value="ECO:0007669"/>
    <property type="project" value="UniProtKB-UniRule"/>
</dbReference>
<dbReference type="GO" id="GO:0006089">
    <property type="term" value="P:lactate metabolic process"/>
    <property type="evidence" value="ECO:0007669"/>
    <property type="project" value="TreeGrafter"/>
</dbReference>
<dbReference type="GO" id="GO:0006099">
    <property type="term" value="P:tricarboxylic acid cycle"/>
    <property type="evidence" value="ECO:0007669"/>
    <property type="project" value="UniProtKB-UniRule"/>
</dbReference>
<dbReference type="CDD" id="cd01339">
    <property type="entry name" value="LDH-like_MDH"/>
    <property type="match status" value="1"/>
</dbReference>
<dbReference type="FunFam" id="3.40.50.720:FF:000018">
    <property type="entry name" value="Malate dehydrogenase"/>
    <property type="match status" value="1"/>
</dbReference>
<dbReference type="FunFam" id="3.90.110.10:FF:000004">
    <property type="entry name" value="Malate dehydrogenase"/>
    <property type="match status" value="1"/>
</dbReference>
<dbReference type="Gene3D" id="3.90.110.10">
    <property type="entry name" value="Lactate dehydrogenase/glycoside hydrolase, family 4, C-terminal"/>
    <property type="match status" value="1"/>
</dbReference>
<dbReference type="Gene3D" id="3.40.50.720">
    <property type="entry name" value="NAD(P)-binding Rossmann-like Domain"/>
    <property type="match status" value="1"/>
</dbReference>
<dbReference type="HAMAP" id="MF_00487">
    <property type="entry name" value="Malate_dehydrog_3"/>
    <property type="match status" value="1"/>
</dbReference>
<dbReference type="InterPro" id="IPR001557">
    <property type="entry name" value="L-lactate/malate_DH"/>
</dbReference>
<dbReference type="InterPro" id="IPR022383">
    <property type="entry name" value="Lactate/malate_DH_C"/>
</dbReference>
<dbReference type="InterPro" id="IPR001236">
    <property type="entry name" value="Lactate/malate_DH_N"/>
</dbReference>
<dbReference type="InterPro" id="IPR015955">
    <property type="entry name" value="Lactate_DH/Glyco_Ohase_4_C"/>
</dbReference>
<dbReference type="InterPro" id="IPR011275">
    <property type="entry name" value="Malate_DH_type3"/>
</dbReference>
<dbReference type="InterPro" id="IPR036291">
    <property type="entry name" value="NAD(P)-bd_dom_sf"/>
</dbReference>
<dbReference type="NCBIfam" id="TIGR01763">
    <property type="entry name" value="MalateDH_bact"/>
    <property type="match status" value="1"/>
</dbReference>
<dbReference type="NCBIfam" id="NF004863">
    <property type="entry name" value="PRK06223.1"/>
    <property type="match status" value="1"/>
</dbReference>
<dbReference type="PANTHER" id="PTHR43128">
    <property type="entry name" value="L-2-HYDROXYCARBOXYLATE DEHYDROGENASE (NAD(P)(+))"/>
    <property type="match status" value="1"/>
</dbReference>
<dbReference type="PANTHER" id="PTHR43128:SF16">
    <property type="entry name" value="L-LACTATE DEHYDROGENASE"/>
    <property type="match status" value="1"/>
</dbReference>
<dbReference type="Pfam" id="PF02866">
    <property type="entry name" value="Ldh_1_C"/>
    <property type="match status" value="1"/>
</dbReference>
<dbReference type="Pfam" id="PF00056">
    <property type="entry name" value="Ldh_1_N"/>
    <property type="match status" value="1"/>
</dbReference>
<dbReference type="PIRSF" id="PIRSF000102">
    <property type="entry name" value="Lac_mal_DH"/>
    <property type="match status" value="1"/>
</dbReference>
<dbReference type="PRINTS" id="PR00086">
    <property type="entry name" value="LLDHDRGNASE"/>
</dbReference>
<dbReference type="SUPFAM" id="SSF56327">
    <property type="entry name" value="LDH C-terminal domain-like"/>
    <property type="match status" value="1"/>
</dbReference>
<dbReference type="SUPFAM" id="SSF51735">
    <property type="entry name" value="NAD(P)-binding Rossmann-fold domains"/>
    <property type="match status" value="1"/>
</dbReference>
<evidence type="ECO:0000255" key="1">
    <source>
        <dbReference type="HAMAP-Rule" id="MF_00487"/>
    </source>
</evidence>
<protein>
    <recommendedName>
        <fullName evidence="1">Malate dehydrogenase</fullName>
        <ecNumber evidence="1">1.1.1.37</ecNumber>
    </recommendedName>
</protein>
<keyword id="KW-0520">NAD</keyword>
<keyword id="KW-0560">Oxidoreductase</keyword>
<keyword id="KW-1185">Reference proteome</keyword>
<keyword id="KW-0816">Tricarboxylic acid cycle</keyword>
<accession>C3M9U0</accession>
<reference key="1">
    <citation type="journal article" date="2009" name="Appl. Environ. Microbiol.">
        <title>Rhizobium sp. strain NGR234 possesses a remarkable number of secretion systems.</title>
        <authorList>
            <person name="Schmeisser C."/>
            <person name="Liesegang H."/>
            <person name="Krysciak D."/>
            <person name="Bakkou N."/>
            <person name="Le Quere A."/>
            <person name="Wollherr A."/>
            <person name="Heinemeyer I."/>
            <person name="Morgenstern B."/>
            <person name="Pommerening-Roeser A."/>
            <person name="Flores M."/>
            <person name="Palacios R."/>
            <person name="Brenner S."/>
            <person name="Gottschalk G."/>
            <person name="Schmitz R.A."/>
            <person name="Broughton W.J."/>
            <person name="Perret X."/>
            <person name="Strittmatter A.W."/>
            <person name="Streit W.R."/>
        </authorList>
    </citation>
    <scope>NUCLEOTIDE SEQUENCE [LARGE SCALE GENOMIC DNA]</scope>
    <source>
        <strain>NBRC 101917 / NGR234</strain>
    </source>
</reference>
<sequence>MARNKIALIGSGMIGGTLAHLAGLKELGDIVLFDIADGIPQGKGLDIAQSSPVEGFDATLTGASDYAAIEGADVCIVTAGVPRKPGMSRDDLLGINLKVMEQVGAGIKKYAPNAFVICITNPLDAMVWALQKFSGLPKNKVVGMAGVLDSSRFRLFLAQEFNVSVQDITAFVLGGHGDTMVPLARYSTVAGIPLTDLVQMGWVTKERLEEIIQRTRDGGAEIVGLLKTGSAYYAPAASAIEMAEAYLKDKKRVLPCAAHLSGQYGVKDMYVGVPTVIGAGGVERIIEIDLNKGEKEAFDKSVGAVAGLCEACIGIAPSLKQ</sequence>
<comment type="function">
    <text evidence="1">Catalyzes the reversible oxidation of malate to oxaloacetate.</text>
</comment>
<comment type="catalytic activity">
    <reaction evidence="1">
        <text>(S)-malate + NAD(+) = oxaloacetate + NADH + H(+)</text>
        <dbReference type="Rhea" id="RHEA:21432"/>
        <dbReference type="ChEBI" id="CHEBI:15378"/>
        <dbReference type="ChEBI" id="CHEBI:15589"/>
        <dbReference type="ChEBI" id="CHEBI:16452"/>
        <dbReference type="ChEBI" id="CHEBI:57540"/>
        <dbReference type="ChEBI" id="CHEBI:57945"/>
        <dbReference type="EC" id="1.1.1.37"/>
    </reaction>
</comment>
<comment type="similarity">
    <text evidence="1">Belongs to the LDH/MDH superfamily. MDH type 3 family.</text>
</comment>
<proteinExistence type="inferred from homology"/>
<feature type="chain" id="PRO_1000191654" description="Malate dehydrogenase">
    <location>
        <begin position="1"/>
        <end position="321"/>
    </location>
</feature>
<feature type="active site" description="Proton acceptor" evidence="1">
    <location>
        <position position="176"/>
    </location>
</feature>
<feature type="binding site" evidence="1">
    <location>
        <begin position="10"/>
        <end position="15"/>
    </location>
    <ligand>
        <name>NAD(+)</name>
        <dbReference type="ChEBI" id="CHEBI:57540"/>
    </ligand>
</feature>
<feature type="binding site" evidence="1">
    <location>
        <position position="34"/>
    </location>
    <ligand>
        <name>NAD(+)</name>
        <dbReference type="ChEBI" id="CHEBI:57540"/>
    </ligand>
</feature>
<feature type="binding site" evidence="1">
    <location>
        <position position="83"/>
    </location>
    <ligand>
        <name>substrate</name>
    </ligand>
</feature>
<feature type="binding site" evidence="1">
    <location>
        <position position="89"/>
    </location>
    <ligand>
        <name>substrate</name>
    </ligand>
</feature>
<feature type="binding site" evidence="1">
    <location>
        <position position="96"/>
    </location>
    <ligand>
        <name>NAD(+)</name>
        <dbReference type="ChEBI" id="CHEBI:57540"/>
    </ligand>
</feature>
<feature type="binding site" evidence="1">
    <location>
        <begin position="119"/>
        <end position="121"/>
    </location>
    <ligand>
        <name>NAD(+)</name>
        <dbReference type="ChEBI" id="CHEBI:57540"/>
    </ligand>
</feature>
<feature type="binding site" evidence="1">
    <location>
        <position position="121"/>
    </location>
    <ligand>
        <name>substrate</name>
    </ligand>
</feature>
<feature type="binding site" evidence="1">
    <location>
        <position position="152"/>
    </location>
    <ligand>
        <name>substrate</name>
    </ligand>
</feature>
<organism>
    <name type="scientific">Sinorhizobium fredii (strain NBRC 101917 / NGR234)</name>
    <dbReference type="NCBI Taxonomy" id="394"/>
    <lineage>
        <taxon>Bacteria</taxon>
        <taxon>Pseudomonadati</taxon>
        <taxon>Pseudomonadota</taxon>
        <taxon>Alphaproteobacteria</taxon>
        <taxon>Hyphomicrobiales</taxon>
        <taxon>Rhizobiaceae</taxon>
        <taxon>Sinorhizobium/Ensifer group</taxon>
        <taxon>Sinorhizobium</taxon>
    </lineage>
</organism>
<name>MDH_SINFN</name>